<gene>
    <name evidence="1" type="primary">xseB</name>
    <name type="ordered locus">Bcenmc03_3650</name>
</gene>
<protein>
    <recommendedName>
        <fullName evidence="1">Exodeoxyribonuclease 7 small subunit</fullName>
        <ecNumber evidence="1">3.1.11.6</ecNumber>
    </recommendedName>
    <alternativeName>
        <fullName evidence="1">Exodeoxyribonuclease VII small subunit</fullName>
        <shortName evidence="1">Exonuclease VII small subunit</shortName>
    </alternativeName>
</protein>
<accession>B1K3T1</accession>
<name>EX7S_BURO0</name>
<organism>
    <name type="scientific">Burkholderia orbicola (strain MC0-3)</name>
    <dbReference type="NCBI Taxonomy" id="406425"/>
    <lineage>
        <taxon>Bacteria</taxon>
        <taxon>Pseudomonadati</taxon>
        <taxon>Pseudomonadota</taxon>
        <taxon>Betaproteobacteria</taxon>
        <taxon>Burkholderiales</taxon>
        <taxon>Burkholderiaceae</taxon>
        <taxon>Burkholderia</taxon>
        <taxon>Burkholderia cepacia complex</taxon>
        <taxon>Burkholderia orbicola</taxon>
    </lineage>
</organism>
<evidence type="ECO:0000255" key="1">
    <source>
        <dbReference type="HAMAP-Rule" id="MF_00337"/>
    </source>
</evidence>
<evidence type="ECO:0000256" key="2">
    <source>
        <dbReference type="SAM" id="MobiDB-lite"/>
    </source>
</evidence>
<comment type="function">
    <text evidence="1">Bidirectionally degrades single-stranded DNA into large acid-insoluble oligonucleotides, which are then degraded further into small acid-soluble oligonucleotides.</text>
</comment>
<comment type="catalytic activity">
    <reaction evidence="1">
        <text>Exonucleolytic cleavage in either 5'- to 3'- or 3'- to 5'-direction to yield nucleoside 5'-phosphates.</text>
        <dbReference type="EC" id="3.1.11.6"/>
    </reaction>
</comment>
<comment type="subunit">
    <text evidence="1">Heterooligomer composed of large and small subunits.</text>
</comment>
<comment type="subcellular location">
    <subcellularLocation>
        <location evidence="1">Cytoplasm</location>
    </subcellularLocation>
</comment>
<comment type="similarity">
    <text evidence="1">Belongs to the XseB family.</text>
</comment>
<sequence length="97" mass="10136">MAKTASPGATPPGNGTEPLPDNYEMALAELETLVARMEGGALSLEDSLAAYRRGATLVAFCQQQLEKVEQQVRVLDGATLKPLSSGTAATDGEDDDL</sequence>
<proteinExistence type="inferred from homology"/>
<keyword id="KW-0963">Cytoplasm</keyword>
<keyword id="KW-0269">Exonuclease</keyword>
<keyword id="KW-0378">Hydrolase</keyword>
<keyword id="KW-0540">Nuclease</keyword>
<feature type="chain" id="PRO_1000119904" description="Exodeoxyribonuclease 7 small subunit">
    <location>
        <begin position="1"/>
        <end position="97"/>
    </location>
</feature>
<feature type="region of interest" description="Disordered" evidence="2">
    <location>
        <begin position="1"/>
        <end position="22"/>
    </location>
</feature>
<dbReference type="EC" id="3.1.11.6" evidence="1"/>
<dbReference type="EMBL" id="CP000959">
    <property type="protein sequence ID" value="ACA92802.1"/>
    <property type="molecule type" value="Genomic_DNA"/>
</dbReference>
<dbReference type="RefSeq" id="WP_006479428.1">
    <property type="nucleotide sequence ID" value="NC_010515.1"/>
</dbReference>
<dbReference type="SMR" id="B1K3T1"/>
<dbReference type="KEGG" id="bcm:Bcenmc03_3650"/>
<dbReference type="HOGENOM" id="CLU_145918_2_0_4"/>
<dbReference type="Proteomes" id="UP000002169">
    <property type="component" value="Chromosome 2"/>
</dbReference>
<dbReference type="GO" id="GO:0005829">
    <property type="term" value="C:cytosol"/>
    <property type="evidence" value="ECO:0007669"/>
    <property type="project" value="TreeGrafter"/>
</dbReference>
<dbReference type="GO" id="GO:0009318">
    <property type="term" value="C:exodeoxyribonuclease VII complex"/>
    <property type="evidence" value="ECO:0007669"/>
    <property type="project" value="InterPro"/>
</dbReference>
<dbReference type="GO" id="GO:0008855">
    <property type="term" value="F:exodeoxyribonuclease VII activity"/>
    <property type="evidence" value="ECO:0007669"/>
    <property type="project" value="UniProtKB-UniRule"/>
</dbReference>
<dbReference type="GO" id="GO:0006308">
    <property type="term" value="P:DNA catabolic process"/>
    <property type="evidence" value="ECO:0007669"/>
    <property type="project" value="UniProtKB-UniRule"/>
</dbReference>
<dbReference type="Gene3D" id="1.10.287.1040">
    <property type="entry name" value="Exonuclease VII, small subunit"/>
    <property type="match status" value="1"/>
</dbReference>
<dbReference type="HAMAP" id="MF_00337">
    <property type="entry name" value="Exonuc_7_S"/>
    <property type="match status" value="1"/>
</dbReference>
<dbReference type="InterPro" id="IPR003761">
    <property type="entry name" value="Exonuc_VII_S"/>
</dbReference>
<dbReference type="InterPro" id="IPR037004">
    <property type="entry name" value="Exonuc_VII_ssu_sf"/>
</dbReference>
<dbReference type="NCBIfam" id="NF002141">
    <property type="entry name" value="PRK00977.1-5"/>
    <property type="match status" value="1"/>
</dbReference>
<dbReference type="NCBIfam" id="TIGR01280">
    <property type="entry name" value="xseB"/>
    <property type="match status" value="1"/>
</dbReference>
<dbReference type="PANTHER" id="PTHR34137">
    <property type="entry name" value="EXODEOXYRIBONUCLEASE 7 SMALL SUBUNIT"/>
    <property type="match status" value="1"/>
</dbReference>
<dbReference type="PANTHER" id="PTHR34137:SF1">
    <property type="entry name" value="EXODEOXYRIBONUCLEASE 7 SMALL SUBUNIT"/>
    <property type="match status" value="1"/>
</dbReference>
<dbReference type="Pfam" id="PF02609">
    <property type="entry name" value="Exonuc_VII_S"/>
    <property type="match status" value="1"/>
</dbReference>
<dbReference type="SUPFAM" id="SSF116842">
    <property type="entry name" value="XseB-like"/>
    <property type="match status" value="1"/>
</dbReference>
<reference key="1">
    <citation type="submission" date="2008-02" db="EMBL/GenBank/DDBJ databases">
        <title>Complete sequence of chromosome 2 of Burkholderia cenocepacia MC0-3.</title>
        <authorList>
            <person name="Copeland A."/>
            <person name="Lucas S."/>
            <person name="Lapidus A."/>
            <person name="Barry K."/>
            <person name="Bruce D."/>
            <person name="Goodwin L."/>
            <person name="Glavina del Rio T."/>
            <person name="Dalin E."/>
            <person name="Tice H."/>
            <person name="Pitluck S."/>
            <person name="Chain P."/>
            <person name="Malfatti S."/>
            <person name="Shin M."/>
            <person name="Vergez L."/>
            <person name="Schmutz J."/>
            <person name="Larimer F."/>
            <person name="Land M."/>
            <person name="Hauser L."/>
            <person name="Kyrpides N."/>
            <person name="Mikhailova N."/>
            <person name="Tiedje J."/>
            <person name="Richardson P."/>
        </authorList>
    </citation>
    <scope>NUCLEOTIDE SEQUENCE [LARGE SCALE GENOMIC DNA]</scope>
    <source>
        <strain>MC0-3</strain>
    </source>
</reference>